<keyword id="KW-0067">ATP-binding</keyword>
<keyword id="KW-0418">Kinase</keyword>
<keyword id="KW-0547">Nucleotide-binding</keyword>
<keyword id="KW-0597">Phosphoprotein</keyword>
<keyword id="KW-0723">Serine/threonine-protein kinase</keyword>
<keyword id="KW-0808">Transferase</keyword>
<dbReference type="EC" id="2.7.11.1"/>
<dbReference type="EMBL" id="AAFW02000044">
    <property type="protein sequence ID" value="EDN63219.1"/>
    <property type="molecule type" value="Genomic_DNA"/>
</dbReference>
<dbReference type="SMR" id="A6ZQG7"/>
<dbReference type="HOGENOM" id="CLU_016904_0_0_1"/>
<dbReference type="Proteomes" id="UP000007060">
    <property type="component" value="Unassembled WGS sequence"/>
</dbReference>
<dbReference type="GO" id="GO:0005829">
    <property type="term" value="C:cytosol"/>
    <property type="evidence" value="ECO:0007669"/>
    <property type="project" value="TreeGrafter"/>
</dbReference>
<dbReference type="GO" id="GO:0005524">
    <property type="term" value="F:ATP binding"/>
    <property type="evidence" value="ECO:0007669"/>
    <property type="project" value="UniProtKB-KW"/>
</dbReference>
<dbReference type="GO" id="GO:0106310">
    <property type="term" value="F:protein serine kinase activity"/>
    <property type="evidence" value="ECO:0007669"/>
    <property type="project" value="RHEA"/>
</dbReference>
<dbReference type="GO" id="GO:0004674">
    <property type="term" value="F:protein serine/threonine kinase activity"/>
    <property type="evidence" value="ECO:0007669"/>
    <property type="project" value="UniProtKB-KW"/>
</dbReference>
<dbReference type="GO" id="GO:0030003">
    <property type="term" value="P:intracellular monoatomic cation homeostasis"/>
    <property type="evidence" value="ECO:0007669"/>
    <property type="project" value="TreeGrafter"/>
</dbReference>
<dbReference type="FunFam" id="1.10.510.10:FF:001007">
    <property type="entry name" value="Hal5p"/>
    <property type="match status" value="1"/>
</dbReference>
<dbReference type="Gene3D" id="1.10.510.10">
    <property type="entry name" value="Transferase(Phosphotransferase) domain 1"/>
    <property type="match status" value="1"/>
</dbReference>
<dbReference type="InterPro" id="IPR011009">
    <property type="entry name" value="Kinase-like_dom_sf"/>
</dbReference>
<dbReference type="InterPro" id="IPR000719">
    <property type="entry name" value="Prot_kinase_dom"/>
</dbReference>
<dbReference type="InterPro" id="IPR008271">
    <property type="entry name" value="Ser/Thr_kinase_AS"/>
</dbReference>
<dbReference type="PANTHER" id="PTHR24343">
    <property type="entry name" value="SERINE/THREONINE KINASE"/>
    <property type="match status" value="1"/>
</dbReference>
<dbReference type="PANTHER" id="PTHR24343:SF43">
    <property type="entry name" value="SERINE_THREONINE-PROTEIN KINASE HAL5-RELATED"/>
    <property type="match status" value="1"/>
</dbReference>
<dbReference type="Pfam" id="PF00069">
    <property type="entry name" value="Pkinase"/>
    <property type="match status" value="1"/>
</dbReference>
<dbReference type="SMART" id="SM00220">
    <property type="entry name" value="S_TKc"/>
    <property type="match status" value="1"/>
</dbReference>
<dbReference type="SUPFAM" id="SSF56112">
    <property type="entry name" value="Protein kinase-like (PK-like)"/>
    <property type="match status" value="1"/>
</dbReference>
<dbReference type="PROSITE" id="PS50011">
    <property type="entry name" value="PROTEIN_KINASE_DOM"/>
    <property type="match status" value="1"/>
</dbReference>
<dbReference type="PROSITE" id="PS00108">
    <property type="entry name" value="PROTEIN_KINASE_ST"/>
    <property type="match status" value="1"/>
</dbReference>
<gene>
    <name type="primary">HAL5</name>
    <name type="ORF">SCY_3128</name>
</gene>
<name>HAL5_YEAS7</name>
<evidence type="ECO:0000250" key="1"/>
<evidence type="ECO:0000250" key="2">
    <source>
        <dbReference type="UniProtKB" id="P38970"/>
    </source>
</evidence>
<evidence type="ECO:0000255" key="3">
    <source>
        <dbReference type="PROSITE-ProRule" id="PRU00159"/>
    </source>
</evidence>
<evidence type="ECO:0000255" key="4">
    <source>
        <dbReference type="PROSITE-ProRule" id="PRU10027"/>
    </source>
</evidence>
<evidence type="ECO:0000256" key="5">
    <source>
        <dbReference type="SAM" id="MobiDB-lite"/>
    </source>
</evidence>
<evidence type="ECO:0000305" key="6"/>
<feature type="chain" id="PRO_0000333584" description="Serine/threonine-protein kinase HAL5">
    <location>
        <begin position="1"/>
        <end position="855"/>
    </location>
</feature>
<feature type="domain" description="Protein kinase" evidence="3">
    <location>
        <begin position="503"/>
        <end position="837"/>
    </location>
</feature>
<feature type="region of interest" description="Disordered" evidence="5">
    <location>
        <begin position="1"/>
        <end position="166"/>
    </location>
</feature>
<feature type="region of interest" description="Disordered" evidence="5">
    <location>
        <begin position="214"/>
        <end position="261"/>
    </location>
</feature>
<feature type="region of interest" description="Disordered" evidence="5">
    <location>
        <begin position="319"/>
        <end position="347"/>
    </location>
</feature>
<feature type="region of interest" description="Disordered" evidence="5">
    <location>
        <begin position="401"/>
        <end position="427"/>
    </location>
</feature>
<feature type="region of interest" description="Disordered" evidence="5">
    <location>
        <begin position="457"/>
        <end position="497"/>
    </location>
</feature>
<feature type="compositionally biased region" description="Polar residues" evidence="5">
    <location>
        <begin position="31"/>
        <end position="45"/>
    </location>
</feature>
<feature type="compositionally biased region" description="Low complexity" evidence="5">
    <location>
        <begin position="57"/>
        <end position="74"/>
    </location>
</feature>
<feature type="compositionally biased region" description="Polar residues" evidence="5">
    <location>
        <begin position="94"/>
        <end position="114"/>
    </location>
</feature>
<feature type="compositionally biased region" description="Basic and acidic residues" evidence="5">
    <location>
        <begin position="125"/>
        <end position="139"/>
    </location>
</feature>
<feature type="compositionally biased region" description="Low complexity" evidence="5">
    <location>
        <begin position="248"/>
        <end position="258"/>
    </location>
</feature>
<feature type="compositionally biased region" description="Polar residues" evidence="5">
    <location>
        <begin position="462"/>
        <end position="474"/>
    </location>
</feature>
<feature type="active site" description="Proton acceptor" evidence="3 4">
    <location>
        <position position="688"/>
    </location>
</feature>
<feature type="binding site" evidence="3">
    <location>
        <begin position="509"/>
        <end position="517"/>
    </location>
    <ligand>
        <name>ATP</name>
        <dbReference type="ChEBI" id="CHEBI:30616"/>
    </ligand>
</feature>
<feature type="binding site" evidence="3">
    <location>
        <position position="546"/>
    </location>
    <ligand>
        <name>ATP</name>
        <dbReference type="ChEBI" id="CHEBI:30616"/>
    </ligand>
</feature>
<feature type="modified residue" description="Phosphoserine" evidence="2">
    <location>
        <position position="17"/>
    </location>
</feature>
<feature type="modified residue" description="Phosphoserine" evidence="2">
    <location>
        <position position="19"/>
    </location>
</feature>
<feature type="modified residue" description="Phosphoserine" evidence="2">
    <location>
        <position position="68"/>
    </location>
</feature>
<feature type="modified residue" description="Phosphoserine" evidence="2">
    <location>
        <position position="72"/>
    </location>
</feature>
<feature type="modified residue" description="Phosphoserine" evidence="2">
    <location>
        <position position="160"/>
    </location>
</feature>
<feature type="modified residue" description="Phosphoserine" evidence="2">
    <location>
        <position position="273"/>
    </location>
</feature>
<feature type="modified residue" description="Phosphoserine" evidence="2">
    <location>
        <position position="277"/>
    </location>
</feature>
<feature type="modified residue" description="Phosphoserine" evidence="2">
    <location>
        <position position="324"/>
    </location>
</feature>
<feature type="modified residue" description="Phosphoserine" evidence="2">
    <location>
        <position position="333"/>
    </location>
</feature>
<feature type="modified residue" description="Phosphoserine" evidence="2">
    <location>
        <position position="336"/>
    </location>
</feature>
<feature type="modified residue" description="Phosphoserine" evidence="2">
    <location>
        <position position="358"/>
    </location>
</feature>
<feature type="modified residue" description="Phosphoserine" evidence="2">
    <location>
        <position position="391"/>
    </location>
</feature>
<feature type="modified residue" description="Phosphoserine" evidence="2">
    <location>
        <position position="395"/>
    </location>
</feature>
<organism>
    <name type="scientific">Saccharomyces cerevisiae (strain YJM789)</name>
    <name type="common">Baker's yeast</name>
    <dbReference type="NCBI Taxonomy" id="307796"/>
    <lineage>
        <taxon>Eukaryota</taxon>
        <taxon>Fungi</taxon>
        <taxon>Dikarya</taxon>
        <taxon>Ascomycota</taxon>
        <taxon>Saccharomycotina</taxon>
        <taxon>Saccharomycetes</taxon>
        <taxon>Saccharomycetales</taxon>
        <taxon>Saccharomycetaceae</taxon>
        <taxon>Saccharomyces</taxon>
    </lineage>
</organism>
<reference key="1">
    <citation type="journal article" date="2007" name="Proc. Natl. Acad. Sci. U.S.A.">
        <title>Genome sequencing and comparative analysis of Saccharomyces cerevisiae strain YJM789.</title>
        <authorList>
            <person name="Wei W."/>
            <person name="McCusker J.H."/>
            <person name="Hyman R.W."/>
            <person name="Jones T."/>
            <person name="Ning Y."/>
            <person name="Cao Z."/>
            <person name="Gu Z."/>
            <person name="Bruno D."/>
            <person name="Miranda M."/>
            <person name="Nguyen M."/>
            <person name="Wilhelmy J."/>
            <person name="Komp C."/>
            <person name="Tamse R."/>
            <person name="Wang X."/>
            <person name="Jia P."/>
            <person name="Luedi P."/>
            <person name="Oefner P.J."/>
            <person name="David L."/>
            <person name="Dietrich F.S."/>
            <person name="Li Y."/>
            <person name="Davis R.W."/>
            <person name="Steinmetz L.M."/>
        </authorList>
    </citation>
    <scope>NUCLEOTIDE SEQUENCE [LARGE SCALE GENOMIC DNA]</scope>
    <source>
        <strain>YJM789</strain>
    </source>
</reference>
<comment type="function">
    <text evidence="1">Protein kinase involved in salt tolerance and pH sensitivity, probably by regulating plasma membrane potential and cation influx. Positively controls the TRK1-TRK2 potassium transport system in response to potassium starvation. Stabilizes TRK1 in the plasma membrane by preventing its vacuolar sorting and degradation. Also stabilizes other plasma membrane nutrient transporters like CAN1, FUR4 and HXT1. May itself be subject to regulation by ARL1 (By similarity).</text>
</comment>
<comment type="catalytic activity">
    <reaction>
        <text>L-seryl-[protein] + ATP = O-phospho-L-seryl-[protein] + ADP + H(+)</text>
        <dbReference type="Rhea" id="RHEA:17989"/>
        <dbReference type="Rhea" id="RHEA-COMP:9863"/>
        <dbReference type="Rhea" id="RHEA-COMP:11604"/>
        <dbReference type="ChEBI" id="CHEBI:15378"/>
        <dbReference type="ChEBI" id="CHEBI:29999"/>
        <dbReference type="ChEBI" id="CHEBI:30616"/>
        <dbReference type="ChEBI" id="CHEBI:83421"/>
        <dbReference type="ChEBI" id="CHEBI:456216"/>
        <dbReference type="EC" id="2.7.11.1"/>
    </reaction>
</comment>
<comment type="catalytic activity">
    <reaction>
        <text>L-threonyl-[protein] + ATP = O-phospho-L-threonyl-[protein] + ADP + H(+)</text>
        <dbReference type="Rhea" id="RHEA:46608"/>
        <dbReference type="Rhea" id="RHEA-COMP:11060"/>
        <dbReference type="Rhea" id="RHEA-COMP:11605"/>
        <dbReference type="ChEBI" id="CHEBI:15378"/>
        <dbReference type="ChEBI" id="CHEBI:30013"/>
        <dbReference type="ChEBI" id="CHEBI:30616"/>
        <dbReference type="ChEBI" id="CHEBI:61977"/>
        <dbReference type="ChEBI" id="CHEBI:456216"/>
        <dbReference type="EC" id="2.7.11.1"/>
    </reaction>
</comment>
<comment type="similarity">
    <text evidence="6">Belongs to the protein kinase superfamily. CAMK Ser/Thr protein kinase family. NPR/HAL subfamily. HAL5 sub-subfamily.</text>
</comment>
<accession>A6ZQG7</accession>
<protein>
    <recommendedName>
        <fullName>Serine/threonine-protein kinase HAL5</fullName>
        <ecNumber>2.7.11.1</ecNumber>
    </recommendedName>
    <alternativeName>
        <fullName>Halotolerance protein 5</fullName>
    </alternativeName>
</protein>
<proteinExistence type="inferred from homology"/>
<sequence length="855" mass="95456">MGDEKLSRHTSLKRARSLSESIKGLFKPSGISGSNNAAAPSSRPGQDQAHSHQTARIITSNVSSPSISPVHSPVLQAAPKHHKLGVPNIAKLSLSPSREPSLNSENEMFSQESFISEKDEDEANLLEREDLQNKKEEKARAKHVRSKEAYVPHHRYTGGSDEVERQPRERLKNFPQNAGSSNPANSNANHVLDQENNFSIDAMLDYDEESKLRRRNSLGVRNHSNRTRSRKNSLSTPRSPPMKNGNDGMNSNATNNVGNGTGNRIYMRGRNQSDSISASSLPKFQEIECKCILDLGHFKVFENGYHEHSLRVLPIITNNKNVDSGDEKDADASVNSGDDGDNDSEANMHKQKSVFSLSGLFKSHKDGNQQQQQQQQQEENGEQINLEKAFSIIPSQRFIKSQTVKKSRTSNLKNGNNDELMKNDGKNIPQIVNPNAAVGAEELKLINALSEKIRKGLKSENTKGNNGEGRSNSNKQEDSDDTEGKAGTTNDDTSHKPCSQKYGKYIGVVGAGAYGVVKICARCKTAKDVLPYSTYSNGKKLFFAVKELKPKPGDQIDKFCTRLTSEFIIGHSLSHPHFEANAMIAGNVSRTTPPKHVFNAPNILKILDLMEYSNSFVEVMEFCASGDLYSLLTRNNISNESNNGSSRLIQTVKEGSGSPLHPLEADCFMKQLLNGVQYMHDHGIAHCDLKPENILFQPNGLLKICDFGTSSVFQTAWEKHVHFQSGAMGSEPYVAPEEFIRDAEYDPRLVDCWSCGIVYCTMVMGQYLWKIAIPEKDSLFKSFLSEIKDDGQFYLFEELRHVSSELNRLRKIALYRTFQVDPTKRITIEQLLQSSWMRKTKCCVVYRPLHTKVSK</sequence>